<keyword id="KW-0106">Calcium</keyword>
<keyword id="KW-0479">Metal-binding</keyword>
<keyword id="KW-1185">Reference proteome</keyword>
<keyword id="KW-0677">Repeat</keyword>
<accession>Q9VJ26</accession>
<gene>
    <name type="primary">Swip-1</name>
    <name type="ORF">CG10641</name>
</gene>
<protein>
    <recommendedName>
        <fullName>EF-hand domain-containing protein D2 homolog</fullName>
    </recommendedName>
    <alternativeName>
        <fullName>Swiprosin-1 homolog</fullName>
    </alternativeName>
</protein>
<dbReference type="EMBL" id="AB081653">
    <property type="protein sequence ID" value="BAC54122.1"/>
    <property type="molecule type" value="mRNA"/>
</dbReference>
<dbReference type="EMBL" id="AE014134">
    <property type="protein sequence ID" value="AAF53731.1"/>
    <property type="molecule type" value="Genomic_DNA"/>
</dbReference>
<dbReference type="EMBL" id="AY094963">
    <property type="protein sequence ID" value="AAM11316.1"/>
    <property type="molecule type" value="mRNA"/>
</dbReference>
<dbReference type="RefSeq" id="NP_001286079.1">
    <property type="nucleotide sequence ID" value="NM_001299150.1"/>
</dbReference>
<dbReference type="RefSeq" id="NP_609925.1">
    <property type="nucleotide sequence ID" value="NM_136081.3"/>
</dbReference>
<dbReference type="SMR" id="Q9VJ26"/>
<dbReference type="BioGRID" id="61149">
    <property type="interactions" value="27"/>
</dbReference>
<dbReference type="FunCoup" id="Q9VJ26">
    <property type="interactions" value="110"/>
</dbReference>
<dbReference type="IntAct" id="Q9VJ26">
    <property type="interactions" value="62"/>
</dbReference>
<dbReference type="STRING" id="7227.FBpp0309283"/>
<dbReference type="PaxDb" id="7227-FBpp0080727"/>
<dbReference type="DNASU" id="35158"/>
<dbReference type="EnsemblMetazoa" id="FBtr0081185">
    <property type="protein sequence ID" value="FBpp0080727"/>
    <property type="gene ID" value="FBgn0032731"/>
</dbReference>
<dbReference type="EnsemblMetazoa" id="FBtr0340322">
    <property type="protein sequence ID" value="FBpp0309283"/>
    <property type="gene ID" value="FBgn0032731"/>
</dbReference>
<dbReference type="GeneID" id="35158"/>
<dbReference type="KEGG" id="dme:Dmel_CG10641"/>
<dbReference type="UCSC" id="CG10641-RA">
    <property type="organism name" value="d. melanogaster"/>
</dbReference>
<dbReference type="AGR" id="FB:FBgn0032731"/>
<dbReference type="CTD" id="35158"/>
<dbReference type="FlyBase" id="FBgn0032731">
    <property type="gene designation" value="Swip-1"/>
</dbReference>
<dbReference type="VEuPathDB" id="VectorBase:FBgn0032731"/>
<dbReference type="eggNOG" id="KOG0041">
    <property type="taxonomic scope" value="Eukaryota"/>
</dbReference>
<dbReference type="HOGENOM" id="CLU_094429_0_0_1"/>
<dbReference type="InParanoid" id="Q9VJ26"/>
<dbReference type="OMA" id="ERMFKQY"/>
<dbReference type="OrthoDB" id="6572480at2759"/>
<dbReference type="PhylomeDB" id="Q9VJ26"/>
<dbReference type="Reactome" id="R-DME-9013405">
    <property type="pathway name" value="RHOD GTPase cycle"/>
</dbReference>
<dbReference type="BioGRID-ORCS" id="35158">
    <property type="hits" value="0 hits in 3 CRISPR screens"/>
</dbReference>
<dbReference type="GenomeRNAi" id="35158"/>
<dbReference type="PRO" id="PR:Q9VJ26"/>
<dbReference type="Proteomes" id="UP000000803">
    <property type="component" value="Chromosome 2L"/>
</dbReference>
<dbReference type="Bgee" id="FBgn0032731">
    <property type="expression patterns" value="Expressed in embryonic/larval hemocyte (Drosophila) and 127 other cell types or tissues"/>
</dbReference>
<dbReference type="ExpressionAtlas" id="Q9VJ26">
    <property type="expression patterns" value="baseline and differential"/>
</dbReference>
<dbReference type="GO" id="GO:0005743">
    <property type="term" value="C:mitochondrial inner membrane"/>
    <property type="evidence" value="ECO:0000250"/>
    <property type="project" value="FlyBase"/>
</dbReference>
<dbReference type="GO" id="GO:0005927">
    <property type="term" value="C:muscle tendon junction"/>
    <property type="evidence" value="ECO:0000314"/>
    <property type="project" value="FlyBase"/>
</dbReference>
<dbReference type="GO" id="GO:0005886">
    <property type="term" value="C:plasma membrane"/>
    <property type="evidence" value="ECO:0000314"/>
    <property type="project" value="FlyBase"/>
</dbReference>
<dbReference type="GO" id="GO:0005509">
    <property type="term" value="F:calcium ion binding"/>
    <property type="evidence" value="ECO:0000318"/>
    <property type="project" value="GO_Central"/>
</dbReference>
<dbReference type="GO" id="GO:0061891">
    <property type="term" value="F:calcium ion sensor activity"/>
    <property type="evidence" value="ECO:0000250"/>
    <property type="project" value="FlyBase"/>
</dbReference>
<dbReference type="GO" id="GO:0007498">
    <property type="term" value="P:mesoderm development"/>
    <property type="evidence" value="ECO:0000270"/>
    <property type="project" value="FlyBase"/>
</dbReference>
<dbReference type="CDD" id="cd00051">
    <property type="entry name" value="EFh"/>
    <property type="match status" value="1"/>
</dbReference>
<dbReference type="FunFam" id="1.10.238.10:FF:000112">
    <property type="entry name" value="EF-hand domain family, member D2"/>
    <property type="match status" value="1"/>
</dbReference>
<dbReference type="Gene3D" id="1.10.238.10">
    <property type="entry name" value="EF-hand"/>
    <property type="match status" value="1"/>
</dbReference>
<dbReference type="InterPro" id="IPR049025">
    <property type="entry name" value="AIF-1_EF_pair"/>
</dbReference>
<dbReference type="InterPro" id="IPR011992">
    <property type="entry name" value="EF-hand-dom_pair"/>
</dbReference>
<dbReference type="InterPro" id="IPR018247">
    <property type="entry name" value="EF_Hand_1_Ca_BS"/>
</dbReference>
<dbReference type="InterPro" id="IPR002048">
    <property type="entry name" value="EF_hand_dom"/>
</dbReference>
<dbReference type="InterPro" id="IPR040365">
    <property type="entry name" value="EFHD1/2"/>
</dbReference>
<dbReference type="PANTHER" id="PTHR13025">
    <property type="entry name" value="EF-HAND DOMAIN-CONTAINING PROTEIN D"/>
    <property type="match status" value="1"/>
</dbReference>
<dbReference type="PANTHER" id="PTHR13025:SF6">
    <property type="entry name" value="EF-HAND DOMAIN-CONTAINING PROTEIN-RELATED"/>
    <property type="match status" value="1"/>
</dbReference>
<dbReference type="Pfam" id="PF21008">
    <property type="entry name" value="AIF-1"/>
    <property type="match status" value="1"/>
</dbReference>
<dbReference type="SMART" id="SM00054">
    <property type="entry name" value="EFh"/>
    <property type="match status" value="2"/>
</dbReference>
<dbReference type="SUPFAM" id="SSF47473">
    <property type="entry name" value="EF-hand"/>
    <property type="match status" value="1"/>
</dbReference>
<dbReference type="PROSITE" id="PS00018">
    <property type="entry name" value="EF_HAND_1"/>
    <property type="match status" value="1"/>
</dbReference>
<dbReference type="PROSITE" id="PS50222">
    <property type="entry name" value="EF_HAND_2"/>
    <property type="match status" value="2"/>
</dbReference>
<proteinExistence type="evidence at transcript level"/>
<sequence>MSVSSNASSASNKDSVDSPSSTTNTDSSELTHILNRRQEIMESQEAGIEVRRTYKVVNVYTDFPEFSRNQIKDYQKTFNTYDTARDGFLDLQELKFMMEKLGAPQTHLGLKQMIAEVDEDNDGKISFREFLLIFRKAQAGELDSDSGLNQLARLTEVDVEQVGVSGAKNFFEAKIEQQLRTNKFHDEIRAEQEERRREEEERAQRRQQFQQRAAIFQ</sequence>
<evidence type="ECO:0000255" key="1">
    <source>
        <dbReference type="PROSITE-ProRule" id="PRU00448"/>
    </source>
</evidence>
<evidence type="ECO:0000256" key="2">
    <source>
        <dbReference type="SAM" id="MobiDB-lite"/>
    </source>
</evidence>
<evidence type="ECO:0000305" key="3"/>
<feature type="chain" id="PRO_0000073647" description="EF-hand domain-containing protein D2 homolog">
    <location>
        <begin position="1"/>
        <end position="217"/>
    </location>
</feature>
<feature type="domain" description="EF-hand 1" evidence="1">
    <location>
        <begin position="69"/>
        <end position="104"/>
    </location>
</feature>
<feature type="domain" description="EF-hand 2" evidence="1">
    <location>
        <begin position="105"/>
        <end position="140"/>
    </location>
</feature>
<feature type="region of interest" description="Disordered" evidence="2">
    <location>
        <begin position="1"/>
        <end position="29"/>
    </location>
</feature>
<feature type="region of interest" description="Disordered" evidence="2">
    <location>
        <begin position="191"/>
        <end position="217"/>
    </location>
</feature>
<feature type="compositionally biased region" description="Low complexity" evidence="2">
    <location>
        <begin position="1"/>
        <end position="28"/>
    </location>
</feature>
<feature type="compositionally biased region" description="Basic and acidic residues" evidence="2">
    <location>
        <begin position="191"/>
        <end position="204"/>
    </location>
</feature>
<feature type="compositionally biased region" description="Low complexity" evidence="2">
    <location>
        <begin position="206"/>
        <end position="217"/>
    </location>
</feature>
<feature type="binding site" evidence="3">
    <location>
        <position position="82"/>
    </location>
    <ligand>
        <name>Ca(2+)</name>
        <dbReference type="ChEBI" id="CHEBI:29108"/>
        <label>1</label>
    </ligand>
</feature>
<feature type="binding site" evidence="3">
    <location>
        <position position="86"/>
    </location>
    <ligand>
        <name>Ca(2+)</name>
        <dbReference type="ChEBI" id="CHEBI:29108"/>
        <label>1</label>
    </ligand>
</feature>
<feature type="binding site" evidence="3">
    <location>
        <position position="93"/>
    </location>
    <ligand>
        <name>Ca(2+)</name>
        <dbReference type="ChEBI" id="CHEBI:29108"/>
        <label>1</label>
    </ligand>
</feature>
<feature type="binding site" evidence="1">
    <location>
        <position position="118"/>
    </location>
    <ligand>
        <name>Ca(2+)</name>
        <dbReference type="ChEBI" id="CHEBI:29108"/>
        <label>2</label>
    </ligand>
</feature>
<feature type="binding site" evidence="1">
    <location>
        <position position="120"/>
    </location>
    <ligand>
        <name>Ca(2+)</name>
        <dbReference type="ChEBI" id="CHEBI:29108"/>
        <label>2</label>
    </ligand>
</feature>
<feature type="binding site" evidence="1">
    <location>
        <position position="122"/>
    </location>
    <ligand>
        <name>Ca(2+)</name>
        <dbReference type="ChEBI" id="CHEBI:29108"/>
        <label>2</label>
    </ligand>
</feature>
<feature type="binding site" evidence="1">
    <location>
        <position position="124"/>
    </location>
    <ligand>
        <name>Ca(2+)</name>
        <dbReference type="ChEBI" id="CHEBI:29108"/>
        <label>2</label>
    </ligand>
</feature>
<feature type="binding site" evidence="1">
    <location>
        <position position="129"/>
    </location>
    <ligand>
        <name>Ca(2+)</name>
        <dbReference type="ChEBI" id="CHEBI:29108"/>
        <label>2</label>
    </ligand>
</feature>
<organism>
    <name type="scientific">Drosophila melanogaster</name>
    <name type="common">Fruit fly</name>
    <dbReference type="NCBI Taxonomy" id="7227"/>
    <lineage>
        <taxon>Eukaryota</taxon>
        <taxon>Metazoa</taxon>
        <taxon>Ecdysozoa</taxon>
        <taxon>Arthropoda</taxon>
        <taxon>Hexapoda</taxon>
        <taxon>Insecta</taxon>
        <taxon>Pterygota</taxon>
        <taxon>Neoptera</taxon>
        <taxon>Endopterygota</taxon>
        <taxon>Diptera</taxon>
        <taxon>Brachycera</taxon>
        <taxon>Muscomorpha</taxon>
        <taxon>Ephydroidea</taxon>
        <taxon>Drosophilidae</taxon>
        <taxon>Drosophila</taxon>
        <taxon>Sophophora</taxon>
    </lineage>
</organism>
<reference key="1">
    <citation type="submission" date="2002-03" db="EMBL/GenBank/DDBJ databases">
        <title>Molecular cloning of post-transcriptional modifier genes of alpha-amylase in Drosophila melanogaster.</title>
        <authorList>
            <person name="Ohba T."/>
            <person name="Nitasaka E."/>
            <person name="Yamazaki T."/>
        </authorList>
    </citation>
    <scope>NUCLEOTIDE SEQUENCE [MRNA]</scope>
    <source>
        <strain>Oregon-R</strain>
    </source>
</reference>
<reference key="2">
    <citation type="journal article" date="2000" name="Science">
        <title>The genome sequence of Drosophila melanogaster.</title>
        <authorList>
            <person name="Adams M.D."/>
            <person name="Celniker S.E."/>
            <person name="Holt R.A."/>
            <person name="Evans C.A."/>
            <person name="Gocayne J.D."/>
            <person name="Amanatides P.G."/>
            <person name="Scherer S.E."/>
            <person name="Li P.W."/>
            <person name="Hoskins R.A."/>
            <person name="Galle R.F."/>
            <person name="George R.A."/>
            <person name="Lewis S.E."/>
            <person name="Richards S."/>
            <person name="Ashburner M."/>
            <person name="Henderson S.N."/>
            <person name="Sutton G.G."/>
            <person name="Wortman J.R."/>
            <person name="Yandell M.D."/>
            <person name="Zhang Q."/>
            <person name="Chen L.X."/>
            <person name="Brandon R.C."/>
            <person name="Rogers Y.-H.C."/>
            <person name="Blazej R.G."/>
            <person name="Champe M."/>
            <person name="Pfeiffer B.D."/>
            <person name="Wan K.H."/>
            <person name="Doyle C."/>
            <person name="Baxter E.G."/>
            <person name="Helt G."/>
            <person name="Nelson C.R."/>
            <person name="Miklos G.L.G."/>
            <person name="Abril J.F."/>
            <person name="Agbayani A."/>
            <person name="An H.-J."/>
            <person name="Andrews-Pfannkoch C."/>
            <person name="Baldwin D."/>
            <person name="Ballew R.M."/>
            <person name="Basu A."/>
            <person name="Baxendale J."/>
            <person name="Bayraktaroglu L."/>
            <person name="Beasley E.M."/>
            <person name="Beeson K.Y."/>
            <person name="Benos P.V."/>
            <person name="Berman B.P."/>
            <person name="Bhandari D."/>
            <person name="Bolshakov S."/>
            <person name="Borkova D."/>
            <person name="Botchan M.R."/>
            <person name="Bouck J."/>
            <person name="Brokstein P."/>
            <person name="Brottier P."/>
            <person name="Burtis K.C."/>
            <person name="Busam D.A."/>
            <person name="Butler H."/>
            <person name="Cadieu E."/>
            <person name="Center A."/>
            <person name="Chandra I."/>
            <person name="Cherry J.M."/>
            <person name="Cawley S."/>
            <person name="Dahlke C."/>
            <person name="Davenport L.B."/>
            <person name="Davies P."/>
            <person name="de Pablos B."/>
            <person name="Delcher A."/>
            <person name="Deng Z."/>
            <person name="Mays A.D."/>
            <person name="Dew I."/>
            <person name="Dietz S.M."/>
            <person name="Dodson K."/>
            <person name="Doup L.E."/>
            <person name="Downes M."/>
            <person name="Dugan-Rocha S."/>
            <person name="Dunkov B.C."/>
            <person name="Dunn P."/>
            <person name="Durbin K.J."/>
            <person name="Evangelista C.C."/>
            <person name="Ferraz C."/>
            <person name="Ferriera S."/>
            <person name="Fleischmann W."/>
            <person name="Fosler C."/>
            <person name="Gabrielian A.E."/>
            <person name="Garg N.S."/>
            <person name="Gelbart W.M."/>
            <person name="Glasser K."/>
            <person name="Glodek A."/>
            <person name="Gong F."/>
            <person name="Gorrell J.H."/>
            <person name="Gu Z."/>
            <person name="Guan P."/>
            <person name="Harris M."/>
            <person name="Harris N.L."/>
            <person name="Harvey D.A."/>
            <person name="Heiman T.J."/>
            <person name="Hernandez J.R."/>
            <person name="Houck J."/>
            <person name="Hostin D."/>
            <person name="Houston K.A."/>
            <person name="Howland T.J."/>
            <person name="Wei M.-H."/>
            <person name="Ibegwam C."/>
            <person name="Jalali M."/>
            <person name="Kalush F."/>
            <person name="Karpen G.H."/>
            <person name="Ke Z."/>
            <person name="Kennison J.A."/>
            <person name="Ketchum K.A."/>
            <person name="Kimmel B.E."/>
            <person name="Kodira C.D."/>
            <person name="Kraft C.L."/>
            <person name="Kravitz S."/>
            <person name="Kulp D."/>
            <person name="Lai Z."/>
            <person name="Lasko P."/>
            <person name="Lei Y."/>
            <person name="Levitsky A.A."/>
            <person name="Li J.H."/>
            <person name="Li Z."/>
            <person name="Liang Y."/>
            <person name="Lin X."/>
            <person name="Liu X."/>
            <person name="Mattei B."/>
            <person name="McIntosh T.C."/>
            <person name="McLeod M.P."/>
            <person name="McPherson D."/>
            <person name="Merkulov G."/>
            <person name="Milshina N.V."/>
            <person name="Mobarry C."/>
            <person name="Morris J."/>
            <person name="Moshrefi A."/>
            <person name="Mount S.M."/>
            <person name="Moy M."/>
            <person name="Murphy B."/>
            <person name="Murphy L."/>
            <person name="Muzny D.M."/>
            <person name="Nelson D.L."/>
            <person name="Nelson D.R."/>
            <person name="Nelson K.A."/>
            <person name="Nixon K."/>
            <person name="Nusskern D.R."/>
            <person name="Pacleb J.M."/>
            <person name="Palazzolo M."/>
            <person name="Pittman G.S."/>
            <person name="Pan S."/>
            <person name="Pollard J."/>
            <person name="Puri V."/>
            <person name="Reese M.G."/>
            <person name="Reinert K."/>
            <person name="Remington K."/>
            <person name="Saunders R.D.C."/>
            <person name="Scheeler F."/>
            <person name="Shen H."/>
            <person name="Shue B.C."/>
            <person name="Siden-Kiamos I."/>
            <person name="Simpson M."/>
            <person name="Skupski M.P."/>
            <person name="Smith T.J."/>
            <person name="Spier E."/>
            <person name="Spradling A.C."/>
            <person name="Stapleton M."/>
            <person name="Strong R."/>
            <person name="Sun E."/>
            <person name="Svirskas R."/>
            <person name="Tector C."/>
            <person name="Turner R."/>
            <person name="Venter E."/>
            <person name="Wang A.H."/>
            <person name="Wang X."/>
            <person name="Wang Z.-Y."/>
            <person name="Wassarman D.A."/>
            <person name="Weinstock G.M."/>
            <person name="Weissenbach J."/>
            <person name="Williams S.M."/>
            <person name="Woodage T."/>
            <person name="Worley K.C."/>
            <person name="Wu D."/>
            <person name="Yang S."/>
            <person name="Yao Q.A."/>
            <person name="Ye J."/>
            <person name="Yeh R.-F."/>
            <person name="Zaveri J.S."/>
            <person name="Zhan M."/>
            <person name="Zhang G."/>
            <person name="Zhao Q."/>
            <person name="Zheng L."/>
            <person name="Zheng X.H."/>
            <person name="Zhong F.N."/>
            <person name="Zhong W."/>
            <person name="Zhou X."/>
            <person name="Zhu S.C."/>
            <person name="Zhu X."/>
            <person name="Smith H.O."/>
            <person name="Gibbs R.A."/>
            <person name="Myers E.W."/>
            <person name="Rubin G.M."/>
            <person name="Venter J.C."/>
        </authorList>
    </citation>
    <scope>NUCLEOTIDE SEQUENCE [LARGE SCALE GENOMIC DNA]</scope>
    <source>
        <strain>Berkeley</strain>
    </source>
</reference>
<reference key="3">
    <citation type="journal article" date="2002" name="Genome Biol.">
        <title>Annotation of the Drosophila melanogaster euchromatic genome: a systematic review.</title>
        <authorList>
            <person name="Misra S."/>
            <person name="Crosby M.A."/>
            <person name="Mungall C.J."/>
            <person name="Matthews B.B."/>
            <person name="Campbell K.S."/>
            <person name="Hradecky P."/>
            <person name="Huang Y."/>
            <person name="Kaminker J.S."/>
            <person name="Millburn G.H."/>
            <person name="Prochnik S.E."/>
            <person name="Smith C.D."/>
            <person name="Tupy J.L."/>
            <person name="Whitfield E.J."/>
            <person name="Bayraktaroglu L."/>
            <person name="Berman B.P."/>
            <person name="Bettencourt B.R."/>
            <person name="Celniker S.E."/>
            <person name="de Grey A.D.N.J."/>
            <person name="Drysdale R.A."/>
            <person name="Harris N.L."/>
            <person name="Richter J."/>
            <person name="Russo S."/>
            <person name="Schroeder A.J."/>
            <person name="Shu S.Q."/>
            <person name="Stapleton M."/>
            <person name="Yamada C."/>
            <person name="Ashburner M."/>
            <person name="Gelbart W.M."/>
            <person name="Rubin G.M."/>
            <person name="Lewis S.E."/>
        </authorList>
    </citation>
    <scope>GENOME REANNOTATION</scope>
    <source>
        <strain>Berkeley</strain>
    </source>
</reference>
<reference key="4">
    <citation type="journal article" date="2002" name="Genome Biol.">
        <title>A Drosophila full-length cDNA resource.</title>
        <authorList>
            <person name="Stapleton M."/>
            <person name="Carlson J.W."/>
            <person name="Brokstein P."/>
            <person name="Yu C."/>
            <person name="Champe M."/>
            <person name="George R.A."/>
            <person name="Guarin H."/>
            <person name="Kronmiller B."/>
            <person name="Pacleb J.M."/>
            <person name="Park S."/>
            <person name="Wan K.H."/>
            <person name="Rubin G.M."/>
            <person name="Celniker S.E."/>
        </authorList>
    </citation>
    <scope>NUCLEOTIDE SEQUENCE [LARGE SCALE MRNA]</scope>
    <source>
        <strain>Berkeley</strain>
        <tissue>Embryo</tissue>
    </source>
</reference>
<name>EFHD2_DROME</name>